<sequence length="689" mass="76469">MSEKTFLVEIGTEELPPKALRSLAESFAANFTAELDNAGLAHGNVEWFAAPRRLALKVANLAESQPDREVEKRGPAIAQAFDAEGKPSKAAEGWARGCGITVDQAERLKTDKGEWLLYRAHVKGESTEALVPNMVATSLAKLPIPKLMRWGASDVHFVRPVHTVTLLLGDKVIPATILGIQSDRVIRGHRFMGEPEFTIDNADQYPQILLERGKVIADYEARKAKIKADAEEAARKIGGNADLSESLLEEVASLVEWPVVLTAKFEEKFLSVPAEALVYTMKGDQKYFPVYDNAGKLLPNFIFVANIESKDPTQIISGNEKVVRPRLADAEFFFNTDRKKRLEDHLPRLQTVLFQQQLGTLRDKTDRIQALAGWIAGQIGADVNHATRAGLLSKCDLMTNMVFEFTDTQGVMGMHYARHDGEAEDVAVALNEQYQPRFAGDDLPSNPVACALAIADKMDTLAGIFGIGQHPKGDKDPFALRRAALGVLRIIVEKNLALDLQTLTEEAVRLYGDKLTNANVVDDVIDFMLGRFRAWYQDEGYTVDTIQAVLARRPTRPADFDARMKAVSHFRTLEEASALAAANKRVSNILAKATEPLNDIVHASVLKEAAEIELARHLVVLRDKLQPYFADGRYQEALIELAALRAPVDEFFENVMVNAEEKDIRINRLTLLSKLRELFLQVADISLLQ</sequence>
<comment type="catalytic activity">
    <reaction evidence="1">
        <text>tRNA(Gly) + glycine + ATP = glycyl-tRNA(Gly) + AMP + diphosphate</text>
        <dbReference type="Rhea" id="RHEA:16013"/>
        <dbReference type="Rhea" id="RHEA-COMP:9664"/>
        <dbReference type="Rhea" id="RHEA-COMP:9683"/>
        <dbReference type="ChEBI" id="CHEBI:30616"/>
        <dbReference type="ChEBI" id="CHEBI:33019"/>
        <dbReference type="ChEBI" id="CHEBI:57305"/>
        <dbReference type="ChEBI" id="CHEBI:78442"/>
        <dbReference type="ChEBI" id="CHEBI:78522"/>
        <dbReference type="ChEBI" id="CHEBI:456215"/>
        <dbReference type="EC" id="6.1.1.14"/>
    </reaction>
</comment>
<comment type="subunit">
    <text evidence="1">Tetramer of two alpha and two beta subunits.</text>
</comment>
<comment type="subcellular location">
    <subcellularLocation>
        <location evidence="1">Cytoplasm</location>
    </subcellularLocation>
</comment>
<comment type="similarity">
    <text evidence="1">Belongs to the class-II aminoacyl-tRNA synthetase family.</text>
</comment>
<protein>
    <recommendedName>
        <fullName evidence="1">Glycine--tRNA ligase beta subunit</fullName>
        <ecNumber evidence="1">6.1.1.14</ecNumber>
    </recommendedName>
    <alternativeName>
        <fullName evidence="1">Glycyl-tRNA synthetase beta subunit</fullName>
        <shortName evidence="1">GlyRS</shortName>
    </alternativeName>
</protein>
<dbReference type="EC" id="6.1.1.14" evidence="1"/>
<dbReference type="EMBL" id="CP001144">
    <property type="protein sequence ID" value="ACH76752.1"/>
    <property type="molecule type" value="Genomic_DNA"/>
</dbReference>
<dbReference type="RefSeq" id="WP_001291741.1">
    <property type="nucleotide sequence ID" value="NC_011205.1"/>
</dbReference>
<dbReference type="SMR" id="B5FLC9"/>
<dbReference type="KEGG" id="sed:SeD_A4037"/>
<dbReference type="HOGENOM" id="CLU_007220_2_2_6"/>
<dbReference type="Proteomes" id="UP000008322">
    <property type="component" value="Chromosome"/>
</dbReference>
<dbReference type="GO" id="GO:0005829">
    <property type="term" value="C:cytosol"/>
    <property type="evidence" value="ECO:0007669"/>
    <property type="project" value="TreeGrafter"/>
</dbReference>
<dbReference type="GO" id="GO:0004814">
    <property type="term" value="F:arginine-tRNA ligase activity"/>
    <property type="evidence" value="ECO:0007669"/>
    <property type="project" value="InterPro"/>
</dbReference>
<dbReference type="GO" id="GO:0005524">
    <property type="term" value="F:ATP binding"/>
    <property type="evidence" value="ECO:0007669"/>
    <property type="project" value="UniProtKB-UniRule"/>
</dbReference>
<dbReference type="GO" id="GO:0004820">
    <property type="term" value="F:glycine-tRNA ligase activity"/>
    <property type="evidence" value="ECO:0007669"/>
    <property type="project" value="UniProtKB-UniRule"/>
</dbReference>
<dbReference type="GO" id="GO:0006420">
    <property type="term" value="P:arginyl-tRNA aminoacylation"/>
    <property type="evidence" value="ECO:0007669"/>
    <property type="project" value="InterPro"/>
</dbReference>
<dbReference type="GO" id="GO:0006426">
    <property type="term" value="P:glycyl-tRNA aminoacylation"/>
    <property type="evidence" value="ECO:0007669"/>
    <property type="project" value="UniProtKB-UniRule"/>
</dbReference>
<dbReference type="HAMAP" id="MF_00255">
    <property type="entry name" value="Gly_tRNA_synth_beta"/>
    <property type="match status" value="1"/>
</dbReference>
<dbReference type="InterPro" id="IPR008909">
    <property type="entry name" value="DALR_anticod-bd"/>
</dbReference>
<dbReference type="InterPro" id="IPR015944">
    <property type="entry name" value="Gly-tRNA-synth_bsu"/>
</dbReference>
<dbReference type="InterPro" id="IPR006194">
    <property type="entry name" value="Gly-tRNA-synth_heterodimer"/>
</dbReference>
<dbReference type="NCBIfam" id="TIGR00211">
    <property type="entry name" value="glyS"/>
    <property type="match status" value="1"/>
</dbReference>
<dbReference type="PANTHER" id="PTHR30075:SF2">
    <property type="entry name" value="GLYCINE--TRNA LIGASE, CHLOROPLASTIC_MITOCHONDRIAL 2"/>
    <property type="match status" value="1"/>
</dbReference>
<dbReference type="PANTHER" id="PTHR30075">
    <property type="entry name" value="GLYCYL-TRNA SYNTHETASE"/>
    <property type="match status" value="1"/>
</dbReference>
<dbReference type="Pfam" id="PF05746">
    <property type="entry name" value="DALR_1"/>
    <property type="match status" value="1"/>
</dbReference>
<dbReference type="Pfam" id="PF02092">
    <property type="entry name" value="tRNA_synt_2f"/>
    <property type="match status" value="1"/>
</dbReference>
<dbReference type="PRINTS" id="PR01045">
    <property type="entry name" value="TRNASYNTHGB"/>
</dbReference>
<dbReference type="SUPFAM" id="SSF109604">
    <property type="entry name" value="HD-domain/PDEase-like"/>
    <property type="match status" value="1"/>
</dbReference>
<dbReference type="PROSITE" id="PS50861">
    <property type="entry name" value="AA_TRNA_LIGASE_II_GLYAB"/>
    <property type="match status" value="1"/>
</dbReference>
<keyword id="KW-0030">Aminoacyl-tRNA synthetase</keyword>
<keyword id="KW-0067">ATP-binding</keyword>
<keyword id="KW-0963">Cytoplasm</keyword>
<keyword id="KW-0436">Ligase</keyword>
<keyword id="KW-0547">Nucleotide-binding</keyword>
<keyword id="KW-0648">Protein biosynthesis</keyword>
<evidence type="ECO:0000255" key="1">
    <source>
        <dbReference type="HAMAP-Rule" id="MF_00255"/>
    </source>
</evidence>
<proteinExistence type="inferred from homology"/>
<accession>B5FLC9</accession>
<organism>
    <name type="scientific">Salmonella dublin (strain CT_02021853)</name>
    <dbReference type="NCBI Taxonomy" id="439851"/>
    <lineage>
        <taxon>Bacteria</taxon>
        <taxon>Pseudomonadati</taxon>
        <taxon>Pseudomonadota</taxon>
        <taxon>Gammaproteobacteria</taxon>
        <taxon>Enterobacterales</taxon>
        <taxon>Enterobacteriaceae</taxon>
        <taxon>Salmonella</taxon>
    </lineage>
</organism>
<gene>
    <name evidence="1" type="primary">glyS</name>
    <name type="ordered locus">SeD_A4037</name>
</gene>
<feature type="chain" id="PRO_1000101332" description="Glycine--tRNA ligase beta subunit">
    <location>
        <begin position="1"/>
        <end position="689"/>
    </location>
</feature>
<name>SYGB_SALDC</name>
<reference key="1">
    <citation type="journal article" date="2011" name="J. Bacteriol.">
        <title>Comparative genomics of 28 Salmonella enterica isolates: evidence for CRISPR-mediated adaptive sublineage evolution.</title>
        <authorList>
            <person name="Fricke W.F."/>
            <person name="Mammel M.K."/>
            <person name="McDermott P.F."/>
            <person name="Tartera C."/>
            <person name="White D.G."/>
            <person name="Leclerc J.E."/>
            <person name="Ravel J."/>
            <person name="Cebula T.A."/>
        </authorList>
    </citation>
    <scope>NUCLEOTIDE SEQUENCE [LARGE SCALE GENOMIC DNA]</scope>
    <source>
        <strain>CT_02021853</strain>
    </source>
</reference>